<gene>
    <name type="ORF">ORF VI</name>
</gene>
<sequence>MENIEKLLMQEKILMLELDLVKAKISLARANGSSQQGELSLHRETPEKEEAVHSALATFTPTQVKAIPEQTAPGKESTNPLMASILPKDMNSVQTEIRLKRPSDFLRPYQGISIPQKSELNSTVTLHGVESGIQHPHINYYVVYNGPHAGIYDDWGCTKAATNGVPGVAQKKFATITEARAAADAYTTSQQTDRLNFIPKGEAQLKPKSFAKALTSPSKQKAHWLTLGTKRPSSDPAPKEISFAPEITMDDFLYLYDLGRKFDGEGDDTMFTTDNEKISLFNFRKNADPQMVREAYAAGLIKTIYPSNNLQEIKYLPKKVKDAVKRFRTNCIKNTEKDIFLKIRSTIPVWTIQGLLHKPRQVIEIGVSKKVVPTESKAMESKIQIEDLTELAVKTGEQFIQSLLRLNDKKKIFVNMVEHDTLVYSKNIKDTVSEDQRAIETFQQRVISGNLLGFHCPAICHFIERTVEKEGGTYKCHHCDKGKAIIQDASTDSGPKDGPPPTRSIVEKEDVPTTSSKQVD</sequence>
<name>IBMP_CAMV4</name>
<dbReference type="EMBL" id="M23620">
    <property type="protein sequence ID" value="AAA03526.1"/>
    <property type="molecule type" value="Unassigned_RNA"/>
</dbReference>
<dbReference type="SMR" id="P22547"/>
<dbReference type="GO" id="GO:0030430">
    <property type="term" value="C:host cell cytoplasm"/>
    <property type="evidence" value="ECO:0007669"/>
    <property type="project" value="UniProtKB-SubCell"/>
</dbReference>
<dbReference type="GO" id="GO:0006417">
    <property type="term" value="P:regulation of translation"/>
    <property type="evidence" value="ECO:0007669"/>
    <property type="project" value="UniProtKB-KW"/>
</dbReference>
<dbReference type="FunFam" id="3.40.970.10:FF:000003">
    <property type="entry name" value="Transactivator/viroplasmin protein"/>
    <property type="match status" value="1"/>
</dbReference>
<dbReference type="Gene3D" id="3.40.970.10">
    <property type="entry name" value="Ribonuclease H1, N-terminal domain"/>
    <property type="match status" value="1"/>
</dbReference>
<dbReference type="InterPro" id="IPR009027">
    <property type="entry name" value="Ribosomal_bL9/RNase_H1_N"/>
</dbReference>
<dbReference type="InterPro" id="IPR011320">
    <property type="entry name" value="RNase_H1_N"/>
</dbReference>
<dbReference type="InterPro" id="IPR037056">
    <property type="entry name" value="RNase_H1_N_sf"/>
</dbReference>
<dbReference type="Pfam" id="PF01693">
    <property type="entry name" value="Cauli_VI"/>
    <property type="match status" value="1"/>
</dbReference>
<dbReference type="SUPFAM" id="SSF55658">
    <property type="entry name" value="L9 N-domain-like"/>
    <property type="match status" value="1"/>
</dbReference>
<protein>
    <recommendedName>
        <fullName>Transactivator/viroplasmin protein</fullName>
        <shortName>Tav</shortName>
    </recommendedName>
    <alternativeName>
        <fullName>Inclusion body matrix protein</fullName>
    </alternativeName>
</protein>
<evidence type="ECO:0000250" key="1">
    <source>
        <dbReference type="UniProtKB" id="P03558"/>
    </source>
</evidence>
<evidence type="ECO:0000256" key="2">
    <source>
        <dbReference type="SAM" id="MobiDB-lite"/>
    </source>
</evidence>
<evidence type="ECO:0000305" key="3"/>
<reference key="1">
    <citation type="journal article" date="1990" name="Mol. Plant Microbe Interact.">
        <title>Point mutations in cauliflower mosaic virus gene VI confer host-specific symptom changes.</title>
        <authorList>
            <person name="Daubert S."/>
            <person name="Routh J."/>
        </authorList>
    </citation>
    <scope>NUCLEOTIDE SEQUENCE</scope>
</reference>
<comment type="function">
    <text evidence="1">Enhances the ribosomal termination-reinitiation event leading to the translation of major open reading frames on the polycistronic viral RNAs.</text>
</comment>
<comment type="subcellular location">
    <subcellularLocation>
        <location>Host cytoplasm</location>
    </subcellularLocation>
    <text>Found in cytoplasmic occlusion bodies.</text>
</comment>
<comment type="miscellaneous">
    <text>The inclusion bodies are the site of viral DNA synthesis, virion assembly and accumulation in the infected cell.</text>
</comment>
<comment type="similarity">
    <text evidence="3">Belongs to the caulimoviridae viroplasmin family.</text>
</comment>
<organismHost>
    <name type="scientific">Arabidopsis thaliana</name>
    <name type="common">Mouse-ear cress</name>
    <dbReference type="NCBI Taxonomy" id="3702"/>
</organismHost>
<organismHost>
    <name type="scientific">Brassica</name>
    <dbReference type="NCBI Taxonomy" id="3705"/>
</organismHost>
<organismHost>
    <name type="scientific">Raphanus</name>
    <dbReference type="NCBI Taxonomy" id="3725"/>
</organismHost>
<keyword id="KW-1035">Host cytoplasm</keyword>
<keyword id="KW-0810">Translation regulation</keyword>
<feature type="chain" id="PRO_0000222037" description="Transactivator/viroplasmin protein">
    <location>
        <begin position="1"/>
        <end position="520"/>
    </location>
</feature>
<feature type="region of interest" description="Disordered" evidence="2">
    <location>
        <begin position="32"/>
        <end position="51"/>
    </location>
</feature>
<feature type="region of interest" description="Disordered" evidence="2">
    <location>
        <begin position="487"/>
        <end position="520"/>
    </location>
</feature>
<feature type="compositionally biased region" description="Basic and acidic residues" evidence="2">
    <location>
        <begin position="40"/>
        <end position="51"/>
    </location>
</feature>
<accession>P22547</accession>
<organism>
    <name type="scientific">Cauliflower mosaic virus (strain D4)</name>
    <name type="common">CaMV</name>
    <dbReference type="NCBI Taxonomy" id="10642"/>
    <lineage>
        <taxon>Viruses</taxon>
        <taxon>Riboviria</taxon>
        <taxon>Pararnavirae</taxon>
        <taxon>Artverviricota</taxon>
        <taxon>Revtraviricetes</taxon>
        <taxon>Ortervirales</taxon>
        <taxon>Caulimoviridae</taxon>
        <taxon>Caulimovirus</taxon>
        <taxon>Caulimovirus tessellobrassicae</taxon>
    </lineage>
</organism>
<proteinExistence type="inferred from homology"/>